<organism>
    <name type="scientific">Thermosipho melanesiensis (strain DSM 12029 / CIP 104789 / BI429)</name>
    <dbReference type="NCBI Taxonomy" id="391009"/>
    <lineage>
        <taxon>Bacteria</taxon>
        <taxon>Thermotogati</taxon>
        <taxon>Thermotogota</taxon>
        <taxon>Thermotogae</taxon>
        <taxon>Thermotogales</taxon>
        <taxon>Fervidobacteriaceae</taxon>
        <taxon>Thermosipho</taxon>
    </lineage>
</organism>
<protein>
    <recommendedName>
        <fullName evidence="1">Protein translocase subunit SecA</fullName>
        <ecNumber evidence="1">7.4.2.8</ecNumber>
    </recommendedName>
</protein>
<reference key="1">
    <citation type="submission" date="2007-05" db="EMBL/GenBank/DDBJ databases">
        <title>Complete sequence of Thermosipho melanesiensis BI429.</title>
        <authorList>
            <consortium name="US DOE Joint Genome Institute"/>
            <person name="Copeland A."/>
            <person name="Lucas S."/>
            <person name="Lapidus A."/>
            <person name="Barry K."/>
            <person name="Glavina del Rio T."/>
            <person name="Dalin E."/>
            <person name="Tice H."/>
            <person name="Pitluck S."/>
            <person name="Chertkov O."/>
            <person name="Brettin T."/>
            <person name="Bruce D."/>
            <person name="Detter J.C."/>
            <person name="Han C."/>
            <person name="Schmutz J."/>
            <person name="Larimer F."/>
            <person name="Land M."/>
            <person name="Hauser L."/>
            <person name="Kyrpides N."/>
            <person name="Mikhailova N."/>
            <person name="Nelson K."/>
            <person name="Gogarten J.P."/>
            <person name="Noll K."/>
            <person name="Richardson P."/>
        </authorList>
    </citation>
    <scope>NUCLEOTIDE SEQUENCE [LARGE SCALE GENOMIC DNA]</scope>
    <source>
        <strain>DSM 12029 / CIP 104789 / BI429</strain>
    </source>
</reference>
<dbReference type="EC" id="7.4.2.8" evidence="1"/>
<dbReference type="EMBL" id="CP000716">
    <property type="protein sequence ID" value="ABR30456.1"/>
    <property type="molecule type" value="Genomic_DNA"/>
</dbReference>
<dbReference type="RefSeq" id="WP_012056817.1">
    <property type="nucleotide sequence ID" value="NC_009616.1"/>
</dbReference>
<dbReference type="SMR" id="A6LKK5"/>
<dbReference type="STRING" id="391009.Tmel_0589"/>
<dbReference type="KEGG" id="tme:Tmel_0589"/>
<dbReference type="eggNOG" id="COG0653">
    <property type="taxonomic scope" value="Bacteria"/>
</dbReference>
<dbReference type="HOGENOM" id="CLU_005314_3_0_0"/>
<dbReference type="OrthoDB" id="9805579at2"/>
<dbReference type="Proteomes" id="UP000001110">
    <property type="component" value="Chromosome"/>
</dbReference>
<dbReference type="GO" id="GO:0031522">
    <property type="term" value="C:cell envelope Sec protein transport complex"/>
    <property type="evidence" value="ECO:0007669"/>
    <property type="project" value="TreeGrafter"/>
</dbReference>
<dbReference type="GO" id="GO:0005829">
    <property type="term" value="C:cytosol"/>
    <property type="evidence" value="ECO:0007669"/>
    <property type="project" value="TreeGrafter"/>
</dbReference>
<dbReference type="GO" id="GO:0005886">
    <property type="term" value="C:plasma membrane"/>
    <property type="evidence" value="ECO:0007669"/>
    <property type="project" value="UniProtKB-SubCell"/>
</dbReference>
<dbReference type="GO" id="GO:0005524">
    <property type="term" value="F:ATP binding"/>
    <property type="evidence" value="ECO:0007669"/>
    <property type="project" value="UniProtKB-UniRule"/>
</dbReference>
<dbReference type="GO" id="GO:0008564">
    <property type="term" value="F:protein-exporting ATPase activity"/>
    <property type="evidence" value="ECO:0007669"/>
    <property type="project" value="UniProtKB-EC"/>
</dbReference>
<dbReference type="GO" id="GO:0065002">
    <property type="term" value="P:intracellular protein transmembrane transport"/>
    <property type="evidence" value="ECO:0007669"/>
    <property type="project" value="UniProtKB-UniRule"/>
</dbReference>
<dbReference type="GO" id="GO:0017038">
    <property type="term" value="P:protein import"/>
    <property type="evidence" value="ECO:0007669"/>
    <property type="project" value="InterPro"/>
</dbReference>
<dbReference type="GO" id="GO:0006605">
    <property type="term" value="P:protein targeting"/>
    <property type="evidence" value="ECO:0007669"/>
    <property type="project" value="UniProtKB-UniRule"/>
</dbReference>
<dbReference type="GO" id="GO:0043952">
    <property type="term" value="P:protein transport by the Sec complex"/>
    <property type="evidence" value="ECO:0007669"/>
    <property type="project" value="TreeGrafter"/>
</dbReference>
<dbReference type="CDD" id="cd17928">
    <property type="entry name" value="DEXDc_SecA"/>
    <property type="match status" value="1"/>
</dbReference>
<dbReference type="CDD" id="cd18803">
    <property type="entry name" value="SF2_C_secA"/>
    <property type="match status" value="1"/>
</dbReference>
<dbReference type="FunFam" id="3.40.50.300:FF:000429">
    <property type="entry name" value="Preprotein translocase subunit SecA"/>
    <property type="match status" value="1"/>
</dbReference>
<dbReference type="Gene3D" id="1.10.3060.10">
    <property type="entry name" value="Helical scaffold and wing domains of SecA"/>
    <property type="match status" value="1"/>
</dbReference>
<dbReference type="Gene3D" id="3.40.50.300">
    <property type="entry name" value="P-loop containing nucleotide triphosphate hydrolases"/>
    <property type="match status" value="3"/>
</dbReference>
<dbReference type="HAMAP" id="MF_01382">
    <property type="entry name" value="SecA"/>
    <property type="match status" value="1"/>
</dbReference>
<dbReference type="InterPro" id="IPR014001">
    <property type="entry name" value="Helicase_ATP-bd"/>
</dbReference>
<dbReference type="InterPro" id="IPR001650">
    <property type="entry name" value="Helicase_C-like"/>
</dbReference>
<dbReference type="InterPro" id="IPR027417">
    <property type="entry name" value="P-loop_NTPase"/>
</dbReference>
<dbReference type="InterPro" id="IPR000185">
    <property type="entry name" value="SecA"/>
</dbReference>
<dbReference type="InterPro" id="IPR020937">
    <property type="entry name" value="SecA_CS"/>
</dbReference>
<dbReference type="InterPro" id="IPR011115">
    <property type="entry name" value="SecA_DEAD"/>
</dbReference>
<dbReference type="InterPro" id="IPR014018">
    <property type="entry name" value="SecA_motor_DEAD"/>
</dbReference>
<dbReference type="InterPro" id="IPR011130">
    <property type="entry name" value="SecA_preprotein_X-link_dom"/>
</dbReference>
<dbReference type="InterPro" id="IPR044722">
    <property type="entry name" value="SecA_SF2_C"/>
</dbReference>
<dbReference type="InterPro" id="IPR011116">
    <property type="entry name" value="SecA_Wing/Scaffold"/>
</dbReference>
<dbReference type="InterPro" id="IPR036266">
    <property type="entry name" value="SecA_Wing/Scaffold_sf"/>
</dbReference>
<dbReference type="InterPro" id="IPR036670">
    <property type="entry name" value="SecA_X-link_sf"/>
</dbReference>
<dbReference type="PANTHER" id="PTHR30612:SF0">
    <property type="entry name" value="CHLOROPLAST PROTEIN-TRANSPORTING ATPASE"/>
    <property type="match status" value="1"/>
</dbReference>
<dbReference type="PANTHER" id="PTHR30612">
    <property type="entry name" value="SECA INNER MEMBRANE COMPONENT OF SEC PROTEIN SECRETION SYSTEM"/>
    <property type="match status" value="1"/>
</dbReference>
<dbReference type="Pfam" id="PF21090">
    <property type="entry name" value="P-loop_SecA"/>
    <property type="match status" value="2"/>
</dbReference>
<dbReference type="Pfam" id="PF07517">
    <property type="entry name" value="SecA_DEAD"/>
    <property type="match status" value="1"/>
</dbReference>
<dbReference type="Pfam" id="PF01043">
    <property type="entry name" value="SecA_PP_bind"/>
    <property type="match status" value="1"/>
</dbReference>
<dbReference type="Pfam" id="PF07516">
    <property type="entry name" value="SecA_SW"/>
    <property type="match status" value="1"/>
</dbReference>
<dbReference type="PRINTS" id="PR00906">
    <property type="entry name" value="SECA"/>
</dbReference>
<dbReference type="SMART" id="SM00957">
    <property type="entry name" value="SecA_DEAD"/>
    <property type="match status" value="1"/>
</dbReference>
<dbReference type="SMART" id="SM00958">
    <property type="entry name" value="SecA_PP_bind"/>
    <property type="match status" value="1"/>
</dbReference>
<dbReference type="SUPFAM" id="SSF81886">
    <property type="entry name" value="Helical scaffold and wing domains of SecA"/>
    <property type="match status" value="1"/>
</dbReference>
<dbReference type="SUPFAM" id="SSF52540">
    <property type="entry name" value="P-loop containing nucleoside triphosphate hydrolases"/>
    <property type="match status" value="2"/>
</dbReference>
<dbReference type="SUPFAM" id="SSF81767">
    <property type="entry name" value="Pre-protein crosslinking domain of SecA"/>
    <property type="match status" value="1"/>
</dbReference>
<dbReference type="PROSITE" id="PS01312">
    <property type="entry name" value="SECA"/>
    <property type="match status" value="1"/>
</dbReference>
<dbReference type="PROSITE" id="PS51196">
    <property type="entry name" value="SECA_MOTOR_DEAD"/>
    <property type="match status" value="1"/>
</dbReference>
<sequence>MKLFDKNERVLKRYWKRVKKINEINLSNVPFSELILNMEKIKNNITGENIDDYLVDVFAIVREIAKRTIGLRPFDVQLIGGMVLHEGKVAEMKTGEGKTLVATMPIVLNALLKKGVHLVTVNDYLAKRDAMWMGPIYLALGLRVAVINTQNKSYEVVWKNKELFEKAIRENLSVWPEGFAEEFLPDDKKVNTDCFDVELKEITRKEAYECDITYGTNTEFGFDYLRDNLVINLDSRVQRGHFFAIVDEVDSILIDEARTPLVISGPSKTKASDYRRFNQVAKRLKKDVHFTVDEKKKTVVLTDEGIEYVEKLLNIENLYDPEHVNKMYFLLNALKAHHLFKKDVDYIVNNGEVIIVDEFTGRLLPGRRYSGGLHQAIEAKEGVPIKEESLTYATITYQNYFRMYKKLAGMTGTAKTEEEEFKQIYGMEVVVIPTHKPMIRKDRDDLIYRTEEEKFQAVVSEIKKRHEKGQPVLVGTTSIEKSERLSQMLKKENIPHNVLNAKYHEKEAEIVARAGQRGAVTIATNMAGRGTDIKLGPGVKELGGLLIIGTERHESRRIDNQLRGRAGRQGDPGESIFFLSLEDDIIRIFGGEKLEKIMNLVKIEKGEPIYHPMLTKLIERVQKKVESINFAIRKNLLQMDTVLDAQRKAIYSYREYLLSGNLDEHFYDAMEDFIERILEEFCEKEVCDTQKINESLKILNIDEKLPDTREETKKYLKDIILKRYNKKKEELGEDFSKIGKYIALRVLDENWRQYLEEVEHVKEAVSLRAYGQKDPIIEFKKETFRMFDEMMARIYEQSIVYTLNIRKITDEAEKESKKELEKLYVQHDEFSLVNRKERRTAEKKGKKRLKVKR</sequence>
<evidence type="ECO:0000255" key="1">
    <source>
        <dbReference type="HAMAP-Rule" id="MF_01382"/>
    </source>
</evidence>
<keyword id="KW-0067">ATP-binding</keyword>
<keyword id="KW-0997">Cell inner membrane</keyword>
<keyword id="KW-1003">Cell membrane</keyword>
<keyword id="KW-0963">Cytoplasm</keyword>
<keyword id="KW-0472">Membrane</keyword>
<keyword id="KW-0547">Nucleotide-binding</keyword>
<keyword id="KW-0653">Protein transport</keyword>
<keyword id="KW-1278">Translocase</keyword>
<keyword id="KW-0811">Translocation</keyword>
<keyword id="KW-0813">Transport</keyword>
<comment type="function">
    <text evidence="1">Part of the Sec protein translocase complex. Interacts with the SecYEG preprotein conducting channel. Has a central role in coupling the hydrolysis of ATP to the transfer of proteins into and across the cell membrane, serving as an ATP-driven molecular motor driving the stepwise translocation of polypeptide chains across the membrane.</text>
</comment>
<comment type="catalytic activity">
    <reaction evidence="1">
        <text>ATP + H2O + cellular proteinSide 1 = ADP + phosphate + cellular proteinSide 2.</text>
        <dbReference type="EC" id="7.4.2.8"/>
    </reaction>
</comment>
<comment type="subunit">
    <text evidence="1">Monomer and homodimer. Part of the essential Sec protein translocation apparatus which comprises SecA, SecYEG and auxiliary proteins SecDF. Other proteins may also be involved.</text>
</comment>
<comment type="subcellular location">
    <subcellularLocation>
        <location evidence="1">Cell inner membrane</location>
        <topology evidence="1">Peripheral membrane protein</topology>
        <orientation evidence="1">Cytoplasmic side</orientation>
    </subcellularLocation>
    <subcellularLocation>
        <location evidence="1">Cytoplasm</location>
    </subcellularLocation>
    <text evidence="1">Distribution is 50-50.</text>
</comment>
<comment type="similarity">
    <text evidence="1">Belongs to the SecA family.</text>
</comment>
<feature type="chain" id="PRO_0000321022" description="Protein translocase subunit SecA">
    <location>
        <begin position="1"/>
        <end position="853"/>
    </location>
</feature>
<feature type="binding site" evidence="1">
    <location>
        <position position="77"/>
    </location>
    <ligand>
        <name>ATP</name>
        <dbReference type="ChEBI" id="CHEBI:30616"/>
    </ligand>
</feature>
<feature type="binding site" evidence="1">
    <location>
        <begin position="95"/>
        <end position="99"/>
    </location>
    <ligand>
        <name>ATP</name>
        <dbReference type="ChEBI" id="CHEBI:30616"/>
    </ligand>
</feature>
<feature type="binding site" evidence="1">
    <location>
        <position position="532"/>
    </location>
    <ligand>
        <name>ATP</name>
        <dbReference type="ChEBI" id="CHEBI:30616"/>
    </ligand>
</feature>
<name>SECA_THEM4</name>
<accession>A6LKK5</accession>
<proteinExistence type="inferred from homology"/>
<gene>
    <name evidence="1" type="primary">secA</name>
    <name type="ordered locus">Tmel_0589</name>
</gene>